<evidence type="ECO:0000250" key="1"/>
<evidence type="ECO:0000255" key="2">
    <source>
        <dbReference type="PROSITE-ProRule" id="PRU01140"/>
    </source>
</evidence>
<evidence type="ECO:0000256" key="3">
    <source>
        <dbReference type="SAM" id="MobiDB-lite"/>
    </source>
</evidence>
<evidence type="ECO:0000305" key="4"/>
<reference key="1">
    <citation type="journal article" date="2005" name="Genome Biol.">
        <title>Full-length cDNAs from chicken bursal lymphocytes to facilitate gene function analysis.</title>
        <authorList>
            <person name="Caldwell R.B."/>
            <person name="Kierzek A.M."/>
            <person name="Arakawa H."/>
            <person name="Bezzubov Y."/>
            <person name="Zaim J."/>
            <person name="Fiedler P."/>
            <person name="Kutter S."/>
            <person name="Blagodatski A."/>
            <person name="Kostovska D."/>
            <person name="Koter M."/>
            <person name="Plachy J."/>
            <person name="Carninci P."/>
            <person name="Hayashizaki Y."/>
            <person name="Buerstedde J.-M."/>
        </authorList>
    </citation>
    <scope>NUCLEOTIDE SEQUENCE [LARGE SCALE MRNA]</scope>
    <source>
        <strain>CB</strain>
        <tissue>Bursa of Fabricius</tissue>
    </source>
</reference>
<reference key="2">
    <citation type="journal article" date="2004" name="Nature">
        <title>Sequence and comparative analysis of the chicken genome provide unique perspectives on vertebrate evolution.</title>
        <authorList>
            <person name="Hillier L.W."/>
            <person name="Miller W."/>
            <person name="Birney E."/>
            <person name="Warren W."/>
            <person name="Hardison R.C."/>
            <person name="Ponting C.P."/>
            <person name="Bork P."/>
            <person name="Burt D.W."/>
            <person name="Groenen M.A.M."/>
            <person name="Delany M.E."/>
            <person name="Dodgson J.B."/>
            <person name="Chinwalla A.T."/>
            <person name="Cliften P.F."/>
            <person name="Clifton S.W."/>
            <person name="Delehaunty K.D."/>
            <person name="Fronick C."/>
            <person name="Fulton R.S."/>
            <person name="Graves T.A."/>
            <person name="Kremitzki C."/>
            <person name="Layman D."/>
            <person name="Magrini V."/>
            <person name="McPherson J.D."/>
            <person name="Miner T.L."/>
            <person name="Minx P."/>
            <person name="Nash W.E."/>
            <person name="Nhan M.N."/>
            <person name="Nelson J.O."/>
            <person name="Oddy L.G."/>
            <person name="Pohl C.S."/>
            <person name="Randall-Maher J."/>
            <person name="Smith S.M."/>
            <person name="Wallis J.W."/>
            <person name="Yang S.-P."/>
            <person name="Romanov M.N."/>
            <person name="Rondelli C.M."/>
            <person name="Paton B."/>
            <person name="Smith J."/>
            <person name="Morrice D."/>
            <person name="Daniels L."/>
            <person name="Tempest H.G."/>
            <person name="Robertson L."/>
            <person name="Masabanda J.S."/>
            <person name="Griffin D.K."/>
            <person name="Vignal A."/>
            <person name="Fillon V."/>
            <person name="Jacobbson L."/>
            <person name="Kerje S."/>
            <person name="Andersson L."/>
            <person name="Crooijmans R.P."/>
            <person name="Aerts J."/>
            <person name="van der Poel J.J."/>
            <person name="Ellegren H."/>
            <person name="Caldwell R.B."/>
            <person name="Hubbard S.J."/>
            <person name="Grafham D.V."/>
            <person name="Kierzek A.M."/>
            <person name="McLaren S.R."/>
            <person name="Overton I.M."/>
            <person name="Arakawa H."/>
            <person name="Beattie K.J."/>
            <person name="Bezzubov Y."/>
            <person name="Boardman P.E."/>
            <person name="Bonfield J.K."/>
            <person name="Croning M.D.R."/>
            <person name="Davies R.M."/>
            <person name="Francis M.D."/>
            <person name="Humphray S.J."/>
            <person name="Scott C.E."/>
            <person name="Taylor R.G."/>
            <person name="Tickle C."/>
            <person name="Brown W.R.A."/>
            <person name="Rogers J."/>
            <person name="Buerstedde J.-M."/>
            <person name="Wilson S.A."/>
            <person name="Stubbs L."/>
            <person name="Ovcharenko I."/>
            <person name="Gordon L."/>
            <person name="Lucas S."/>
            <person name="Miller M.M."/>
            <person name="Inoko H."/>
            <person name="Shiina T."/>
            <person name="Kaufman J."/>
            <person name="Salomonsen J."/>
            <person name="Skjoedt K."/>
            <person name="Wong G.K.-S."/>
            <person name="Wang J."/>
            <person name="Liu B."/>
            <person name="Wang J."/>
            <person name="Yu J."/>
            <person name="Yang H."/>
            <person name="Nefedov M."/>
            <person name="Koriabine M."/>
            <person name="Dejong P.J."/>
            <person name="Goodstadt L."/>
            <person name="Webber C."/>
            <person name="Dickens N.J."/>
            <person name="Letunic I."/>
            <person name="Suyama M."/>
            <person name="Torrents D."/>
            <person name="von Mering C."/>
            <person name="Zdobnov E.M."/>
            <person name="Makova K."/>
            <person name="Nekrutenko A."/>
            <person name="Elnitski L."/>
            <person name="Eswara P."/>
            <person name="King D.C."/>
            <person name="Yang S.-P."/>
            <person name="Tyekucheva S."/>
            <person name="Radakrishnan A."/>
            <person name="Harris R.S."/>
            <person name="Chiaromonte F."/>
            <person name="Taylor J."/>
            <person name="He J."/>
            <person name="Rijnkels M."/>
            <person name="Griffiths-Jones S."/>
            <person name="Ureta-Vidal A."/>
            <person name="Hoffman M.M."/>
            <person name="Severin J."/>
            <person name="Searle S.M.J."/>
            <person name="Law A.S."/>
            <person name="Speed D."/>
            <person name="Waddington D."/>
            <person name="Cheng Z."/>
            <person name="Tuzun E."/>
            <person name="Eichler E."/>
            <person name="Bao Z."/>
            <person name="Flicek P."/>
            <person name="Shteynberg D.D."/>
            <person name="Brent M.R."/>
            <person name="Bye J.M."/>
            <person name="Huckle E.J."/>
            <person name="Chatterji S."/>
            <person name="Dewey C."/>
            <person name="Pachter L."/>
            <person name="Kouranov A."/>
            <person name="Mourelatos Z."/>
            <person name="Hatzigeorgiou A.G."/>
            <person name="Paterson A.H."/>
            <person name="Ivarie R."/>
            <person name="Brandstrom M."/>
            <person name="Axelsson E."/>
            <person name="Backstrom N."/>
            <person name="Berlin S."/>
            <person name="Webster M.T."/>
            <person name="Pourquie O."/>
            <person name="Reymond A."/>
            <person name="Ucla C."/>
            <person name="Antonarakis S.E."/>
            <person name="Long M."/>
            <person name="Emerson J.J."/>
            <person name="Betran E."/>
            <person name="Dupanloup I."/>
            <person name="Kaessmann H."/>
            <person name="Hinrichs A.S."/>
            <person name="Bejerano G."/>
            <person name="Furey T.S."/>
            <person name="Harte R.A."/>
            <person name="Raney B."/>
            <person name="Siepel A."/>
            <person name="Kent W.J."/>
            <person name="Haussler D."/>
            <person name="Eyras E."/>
            <person name="Castelo R."/>
            <person name="Abril J.F."/>
            <person name="Castellano S."/>
            <person name="Camara F."/>
            <person name="Parra G."/>
            <person name="Guigo R."/>
            <person name="Bourque G."/>
            <person name="Tesler G."/>
            <person name="Pevzner P.A."/>
            <person name="Smit A."/>
            <person name="Fulton L.A."/>
            <person name="Mardis E.R."/>
            <person name="Wilson R.K."/>
        </authorList>
    </citation>
    <scope>NUCLEOTIDE SEQUENCE [LARGE SCALE GENOMIC DNA]</scope>
    <source>
        <strain>Red jungle fowl</strain>
    </source>
</reference>
<accession>Q5ZJ02</accession>
<accession>F1NCX4</accession>
<keyword id="KW-0238">DNA-binding</keyword>
<keyword id="KW-0479">Metal-binding</keyword>
<keyword id="KW-0507">mRNA processing</keyword>
<keyword id="KW-0508">mRNA splicing</keyword>
<keyword id="KW-0539">Nucleus</keyword>
<keyword id="KW-1185">Reference proteome</keyword>
<keyword id="KW-0677">Repeat</keyword>
<keyword id="KW-0862">Zinc</keyword>
<keyword id="KW-0863">Zinc-finger</keyword>
<name>ZN326_CHICK</name>
<sequence>MDYGEAEDRDWRFPDTPMHCGVNMPSGSVSDMDRDYGHGGYGGPRSMDSYLNQSYGMESHGGGGGGGGGGGNRFGPYESYDSGSSLGGRDLYRSGYGYNEPEQSRFGGSYGGRFDNSYRNSLDSFGGRNQGGSSWEAPYSRSKLRPGFMEDRGRESYSSYSSFSSPHMKPAPVGSRGRGTPAYPESGFGSRNYDAFGGPSTGRGRGRGHMGDFGGMHRPGIVVDYHNKPSPAAVAARGIKRKMMPQPYNKPGGTFIKKPKMTKPILKLTQKKSSNMKSSFQDSTIEEIEVDTSGAVVIYEDFTRDAYDVGYQTFGDSKGEGKSEEEEKRRIEARREKQRRRREKNSEKYGDGYRMAFTCSFCKFRTFEEKEIESHLESAAHQETLDHIQKQTKFDKVVMEFLHECMVNKFKKTAMRKQQTSNQTENAQAVEKDIMEGVTADDHMMKVETVHCSACSVYVPALHSSVQQHLKSPDHTKGKQAYREQIKRESVLTATSILNNPIVKARYELYVKGENPFEINDQAQEQQTEEEDKAEEPAEGEEEEEEEEEEETEEQTDFTLDHTEDN</sequence>
<gene>
    <name type="primary">ZNF326</name>
    <name type="synonym">ZIRD</name>
    <name type="ORF">RCJMB04_22c23</name>
</gene>
<dbReference type="EMBL" id="AJ720632">
    <property type="protein sequence ID" value="CAG32291.1"/>
    <property type="status" value="ALT_INIT"/>
    <property type="molecule type" value="mRNA"/>
</dbReference>
<dbReference type="EMBL" id="AC140938">
    <property type="status" value="NOT_ANNOTATED_CDS"/>
    <property type="molecule type" value="Genomic_DNA"/>
</dbReference>
<dbReference type="RefSeq" id="NP_001006533.2">
    <property type="nucleotide sequence ID" value="NM_001006533.3"/>
</dbReference>
<dbReference type="FunCoup" id="Q5ZJ02">
    <property type="interactions" value="748"/>
</dbReference>
<dbReference type="STRING" id="9031.ENSGALP00000009853"/>
<dbReference type="PaxDb" id="9031-ENSGALP00000009853"/>
<dbReference type="Ensembl" id="ENSGALT00010055295.1">
    <property type="protein sequence ID" value="ENSGALP00010033464.1"/>
    <property type="gene ID" value="ENSGALG00010022743.1"/>
</dbReference>
<dbReference type="GeneID" id="424512"/>
<dbReference type="KEGG" id="gga:424512"/>
<dbReference type="CTD" id="284695"/>
<dbReference type="VEuPathDB" id="HostDB:geneid_424512"/>
<dbReference type="eggNOG" id="ENOG502QUAZ">
    <property type="taxonomic scope" value="Eukaryota"/>
</dbReference>
<dbReference type="GeneTree" id="ENSGT00530000063777"/>
<dbReference type="HOGENOM" id="CLU_024193_2_0_1"/>
<dbReference type="InParanoid" id="Q5ZJ02"/>
<dbReference type="OMA" id="DDYTHSC"/>
<dbReference type="OrthoDB" id="9904304at2759"/>
<dbReference type="PRO" id="PR:Q5ZJ02"/>
<dbReference type="Proteomes" id="UP000000539">
    <property type="component" value="Chromosome 8"/>
</dbReference>
<dbReference type="Bgee" id="ENSGALG00000006113">
    <property type="expression patterns" value="Expressed in granulocyte and 13 other cell types or tissues"/>
</dbReference>
<dbReference type="GO" id="GO:0044609">
    <property type="term" value="C:DBIRD complex"/>
    <property type="evidence" value="ECO:0000250"/>
    <property type="project" value="UniProtKB"/>
</dbReference>
<dbReference type="GO" id="GO:0005654">
    <property type="term" value="C:nucleoplasm"/>
    <property type="evidence" value="ECO:0007669"/>
    <property type="project" value="Ensembl"/>
</dbReference>
<dbReference type="GO" id="GO:0005634">
    <property type="term" value="C:nucleus"/>
    <property type="evidence" value="ECO:0000318"/>
    <property type="project" value="GO_Central"/>
</dbReference>
<dbReference type="GO" id="GO:0003677">
    <property type="term" value="F:DNA binding"/>
    <property type="evidence" value="ECO:0007669"/>
    <property type="project" value="UniProtKB-KW"/>
</dbReference>
<dbReference type="GO" id="GO:0000993">
    <property type="term" value="F:RNA polymerase II complex binding"/>
    <property type="evidence" value="ECO:0000250"/>
    <property type="project" value="UniProtKB"/>
</dbReference>
<dbReference type="GO" id="GO:0008270">
    <property type="term" value="F:zinc ion binding"/>
    <property type="evidence" value="ECO:0007669"/>
    <property type="project" value="UniProtKB-KW"/>
</dbReference>
<dbReference type="GO" id="GO:0006397">
    <property type="term" value="P:mRNA processing"/>
    <property type="evidence" value="ECO:0007669"/>
    <property type="project" value="UniProtKB-KW"/>
</dbReference>
<dbReference type="GO" id="GO:0032784">
    <property type="term" value="P:regulation of DNA-templated transcription elongation"/>
    <property type="evidence" value="ECO:0000250"/>
    <property type="project" value="UniProtKB"/>
</dbReference>
<dbReference type="GO" id="GO:0043484">
    <property type="term" value="P:regulation of RNA splicing"/>
    <property type="evidence" value="ECO:0000250"/>
    <property type="project" value="UniProtKB"/>
</dbReference>
<dbReference type="GO" id="GO:0008380">
    <property type="term" value="P:RNA splicing"/>
    <property type="evidence" value="ECO:0007669"/>
    <property type="project" value="UniProtKB-KW"/>
</dbReference>
<dbReference type="InterPro" id="IPR007071">
    <property type="entry name" value="AKAP95"/>
</dbReference>
<dbReference type="InterPro" id="IPR034736">
    <property type="entry name" value="ZF_C2H2_AKAP95"/>
</dbReference>
<dbReference type="PANTHER" id="PTHR12190">
    <property type="entry name" value="A-KINASE ANCHOR PROTEIN AKAP 8"/>
    <property type="match status" value="1"/>
</dbReference>
<dbReference type="PANTHER" id="PTHR12190:SF1">
    <property type="entry name" value="DBIRD COMPLEX SUBUNIT ZNF326"/>
    <property type="match status" value="1"/>
</dbReference>
<dbReference type="Pfam" id="PF04988">
    <property type="entry name" value="AKAP95"/>
    <property type="match status" value="1"/>
</dbReference>
<dbReference type="PROSITE" id="PS51799">
    <property type="entry name" value="ZF_C2H2_AKAP95"/>
    <property type="match status" value="2"/>
</dbReference>
<comment type="function">
    <text evidence="1">Core component of the DBIRD complex, a multiprotein complex that acts at the interface between core mRNP particles and RNA polymerase II (RNAPII) and integrates transcript elongation with the regulation of alternative splicing.</text>
</comment>
<comment type="subunit">
    <text evidence="1">Component of the DBIRD complex.</text>
</comment>
<comment type="subcellular location">
    <subcellularLocation>
        <location evidence="1">Nucleus</location>
    </subcellularLocation>
</comment>
<comment type="similarity">
    <text evidence="2">Belongs to the AKAP95 family.</text>
</comment>
<comment type="sequence caution" evidence="4">
    <conflict type="erroneous initiation">
        <sequence resource="EMBL-CDS" id="CAG32291"/>
    </conflict>
</comment>
<organism>
    <name type="scientific">Gallus gallus</name>
    <name type="common">Chicken</name>
    <dbReference type="NCBI Taxonomy" id="9031"/>
    <lineage>
        <taxon>Eukaryota</taxon>
        <taxon>Metazoa</taxon>
        <taxon>Chordata</taxon>
        <taxon>Craniata</taxon>
        <taxon>Vertebrata</taxon>
        <taxon>Euteleostomi</taxon>
        <taxon>Archelosauria</taxon>
        <taxon>Archosauria</taxon>
        <taxon>Dinosauria</taxon>
        <taxon>Saurischia</taxon>
        <taxon>Theropoda</taxon>
        <taxon>Coelurosauria</taxon>
        <taxon>Aves</taxon>
        <taxon>Neognathae</taxon>
        <taxon>Galloanserae</taxon>
        <taxon>Galliformes</taxon>
        <taxon>Phasianidae</taxon>
        <taxon>Phasianinae</taxon>
        <taxon>Gallus</taxon>
    </lineage>
</organism>
<protein>
    <recommendedName>
        <fullName>DBIRD complex subunit ZNF326</fullName>
    </recommendedName>
    <alternativeName>
        <fullName>Zinc finger protein 326</fullName>
    </alternativeName>
    <alternativeName>
        <fullName>Zinc finger protein interacting with mRNPs</fullName>
    </alternativeName>
</protein>
<feature type="chain" id="PRO_0000075390" description="DBIRD complex subunit ZNF326">
    <location>
        <begin position="1"/>
        <end position="566"/>
    </location>
</feature>
<feature type="zinc finger region" description="C2H2 AKAP95-type 1" evidence="2">
    <location>
        <begin position="359"/>
        <end position="381"/>
    </location>
</feature>
<feature type="zinc finger region" description="C2H2 AKAP95-type 2" evidence="2">
    <location>
        <begin position="452"/>
        <end position="475"/>
    </location>
</feature>
<feature type="region of interest" description="Disordered" evidence="3">
    <location>
        <begin position="19"/>
        <end position="81"/>
    </location>
</feature>
<feature type="region of interest" description="Disordered" evidence="3">
    <location>
        <begin position="145"/>
        <end position="180"/>
    </location>
</feature>
<feature type="region of interest" description="Disordered" evidence="3">
    <location>
        <begin position="314"/>
        <end position="347"/>
    </location>
</feature>
<feature type="region of interest" description="Disordered" evidence="3">
    <location>
        <begin position="516"/>
        <end position="566"/>
    </location>
</feature>
<feature type="short sequence motif" description="Bipartite nuclear localization signal" evidence="1">
    <location>
        <begin position="240"/>
        <end position="263"/>
    </location>
</feature>
<feature type="compositionally biased region" description="Gly residues" evidence="3">
    <location>
        <begin position="59"/>
        <end position="73"/>
    </location>
</feature>
<feature type="compositionally biased region" description="Low complexity" evidence="3">
    <location>
        <begin position="156"/>
        <end position="165"/>
    </location>
</feature>
<feature type="compositionally biased region" description="Basic and acidic residues" evidence="3">
    <location>
        <begin position="317"/>
        <end position="335"/>
    </location>
</feature>
<feature type="compositionally biased region" description="Acidic residues" evidence="3">
    <location>
        <begin position="527"/>
        <end position="556"/>
    </location>
</feature>
<feature type="sequence conflict" description="In Ref. 1; CAG32291." evidence="4" ref="1">
    <location>
        <position position="541"/>
    </location>
</feature>
<proteinExistence type="evidence at transcript level"/>